<sequence>MQIEMKDIHKTFGKNQVLSGVSFQLMPGEVHALMGENGAGKSTLMNILTGLHKADKGQISINGNETYFSNPKEAEQHGIAFIHQELNIWPEMTVLENLFIGKEISSKLGVLQTRKMKALAKEQFDKLSVSLSLDQEAGECSVGQQQMIEIAKALMTNAEVIIMDEPTAALTEREISKLFEVITALKKNGVSIVYISHRMEEIFAICDRITIMRDGKTVDTTNISETDFDEVVKKMVGRELTERYPKRTPSLGDKVFEVKNASVKGSFEDVSFYVRSGEIVGVSGLMGAGRTEMMRALFGVDRLDTGEIWIAGKKTAIKNPQEAVKKGLGFITENRKDEGLLLDTSIRENIALPNLSSFSPKGLIDHKREAEFVDLLIKRLTIKTASPETHARHLSGGNQQKVVIAKWIGIGPKVLILDEPTRGVDVGAKREIYTLMNELTERGVAIIMVSSELPEILGMSDRIIVVHEGRISGEIHAREATQERIMTLATGGR</sequence>
<organism>
    <name type="scientific">Bacillus subtilis (strain 168)</name>
    <dbReference type="NCBI Taxonomy" id="224308"/>
    <lineage>
        <taxon>Bacteria</taxon>
        <taxon>Bacillati</taxon>
        <taxon>Bacillota</taxon>
        <taxon>Bacilli</taxon>
        <taxon>Bacillales</taxon>
        <taxon>Bacillaceae</taxon>
        <taxon>Bacillus</taxon>
    </lineage>
</organism>
<name>RBSA_BACSU</name>
<protein>
    <recommendedName>
        <fullName evidence="1">Ribose import ATP-binding protein RbsA</fullName>
        <ecNumber evidence="1">7.5.2.7</ecNumber>
    </recommendedName>
</protein>
<proteinExistence type="inferred from homology"/>
<comment type="function">
    <text evidence="1">Part of the ABC transporter complex RbsABC involved in ribose import. Responsible for energy coupling to the transport system.</text>
</comment>
<comment type="catalytic activity">
    <reaction evidence="1">
        <text>D-ribose(out) + ATP + H2O = D-ribose(in) + ADP + phosphate + H(+)</text>
        <dbReference type="Rhea" id="RHEA:29903"/>
        <dbReference type="ChEBI" id="CHEBI:15377"/>
        <dbReference type="ChEBI" id="CHEBI:15378"/>
        <dbReference type="ChEBI" id="CHEBI:30616"/>
        <dbReference type="ChEBI" id="CHEBI:43474"/>
        <dbReference type="ChEBI" id="CHEBI:47013"/>
        <dbReference type="ChEBI" id="CHEBI:456216"/>
        <dbReference type="EC" id="7.5.2.7"/>
    </reaction>
</comment>
<comment type="subunit">
    <text evidence="1">The complex is composed of an ATP-binding protein (RbsA), two transmembrane proteins (RbsC) and a solute-binding protein (RbsB).</text>
</comment>
<comment type="subcellular location">
    <subcellularLocation>
        <location evidence="1">Cell membrane</location>
        <topology evidence="1">Peripheral membrane protein</topology>
    </subcellularLocation>
</comment>
<comment type="similarity">
    <text evidence="1">Belongs to the ABC transporter superfamily. Ribose importer (TC 3.A.1.2.1) family.</text>
</comment>
<accession>P36947</accession>
<accession>P96732</accession>
<gene>
    <name evidence="1" type="primary">rbsA</name>
    <name type="ordered locus">BSU35940</name>
</gene>
<reference key="1">
    <citation type="journal article" date="1994" name="Microbiology">
        <title>Analysis of a ribose transport operon from Bacillus subtilis.</title>
        <authorList>
            <person name="Woodson K."/>
            <person name="Devine K.M."/>
        </authorList>
    </citation>
    <scope>NUCLEOTIDE SEQUENCE [GENOMIC DNA]</scope>
    <source>
        <strain>168</strain>
    </source>
</reference>
<reference key="2">
    <citation type="journal article" date="1997" name="Microbiology">
        <title>The Bacillus subtilis genome from gerBC (311 degrees) to licR (334 degrees).</title>
        <authorList>
            <person name="Presecan E."/>
            <person name="Moszer I."/>
            <person name="Boursier L."/>
            <person name="Cruz Ramos H."/>
            <person name="De La Fuente V."/>
            <person name="Hullo M.-F."/>
            <person name="Lelong C."/>
            <person name="Schleich S."/>
            <person name="Sekowska A."/>
            <person name="Song B.H."/>
            <person name="Villani G."/>
            <person name="Kunst F."/>
            <person name="Danchin A."/>
            <person name="Glaser P."/>
        </authorList>
    </citation>
    <scope>NUCLEOTIDE SEQUENCE [GENOMIC DNA]</scope>
    <source>
        <strain>168</strain>
    </source>
</reference>
<reference key="3">
    <citation type="journal article" date="1997" name="Nature">
        <title>The complete genome sequence of the Gram-positive bacterium Bacillus subtilis.</title>
        <authorList>
            <person name="Kunst F."/>
            <person name="Ogasawara N."/>
            <person name="Moszer I."/>
            <person name="Albertini A.M."/>
            <person name="Alloni G."/>
            <person name="Azevedo V."/>
            <person name="Bertero M.G."/>
            <person name="Bessieres P."/>
            <person name="Bolotin A."/>
            <person name="Borchert S."/>
            <person name="Borriss R."/>
            <person name="Boursier L."/>
            <person name="Brans A."/>
            <person name="Braun M."/>
            <person name="Brignell S.C."/>
            <person name="Bron S."/>
            <person name="Brouillet S."/>
            <person name="Bruschi C.V."/>
            <person name="Caldwell B."/>
            <person name="Capuano V."/>
            <person name="Carter N.M."/>
            <person name="Choi S.-K."/>
            <person name="Codani J.-J."/>
            <person name="Connerton I.F."/>
            <person name="Cummings N.J."/>
            <person name="Daniel R.A."/>
            <person name="Denizot F."/>
            <person name="Devine K.M."/>
            <person name="Duesterhoeft A."/>
            <person name="Ehrlich S.D."/>
            <person name="Emmerson P.T."/>
            <person name="Entian K.-D."/>
            <person name="Errington J."/>
            <person name="Fabret C."/>
            <person name="Ferrari E."/>
            <person name="Foulger D."/>
            <person name="Fritz C."/>
            <person name="Fujita M."/>
            <person name="Fujita Y."/>
            <person name="Fuma S."/>
            <person name="Galizzi A."/>
            <person name="Galleron N."/>
            <person name="Ghim S.-Y."/>
            <person name="Glaser P."/>
            <person name="Goffeau A."/>
            <person name="Golightly E.J."/>
            <person name="Grandi G."/>
            <person name="Guiseppi G."/>
            <person name="Guy B.J."/>
            <person name="Haga K."/>
            <person name="Haiech J."/>
            <person name="Harwood C.R."/>
            <person name="Henaut A."/>
            <person name="Hilbert H."/>
            <person name="Holsappel S."/>
            <person name="Hosono S."/>
            <person name="Hullo M.-F."/>
            <person name="Itaya M."/>
            <person name="Jones L.-M."/>
            <person name="Joris B."/>
            <person name="Karamata D."/>
            <person name="Kasahara Y."/>
            <person name="Klaerr-Blanchard M."/>
            <person name="Klein C."/>
            <person name="Kobayashi Y."/>
            <person name="Koetter P."/>
            <person name="Koningstein G."/>
            <person name="Krogh S."/>
            <person name="Kumano M."/>
            <person name="Kurita K."/>
            <person name="Lapidus A."/>
            <person name="Lardinois S."/>
            <person name="Lauber J."/>
            <person name="Lazarevic V."/>
            <person name="Lee S.-M."/>
            <person name="Levine A."/>
            <person name="Liu H."/>
            <person name="Masuda S."/>
            <person name="Mauel C."/>
            <person name="Medigue C."/>
            <person name="Medina N."/>
            <person name="Mellado R.P."/>
            <person name="Mizuno M."/>
            <person name="Moestl D."/>
            <person name="Nakai S."/>
            <person name="Noback M."/>
            <person name="Noone D."/>
            <person name="O'Reilly M."/>
            <person name="Ogawa K."/>
            <person name="Ogiwara A."/>
            <person name="Oudega B."/>
            <person name="Park S.-H."/>
            <person name="Parro V."/>
            <person name="Pohl T.M."/>
            <person name="Portetelle D."/>
            <person name="Porwollik S."/>
            <person name="Prescott A.M."/>
            <person name="Presecan E."/>
            <person name="Pujic P."/>
            <person name="Purnelle B."/>
            <person name="Rapoport G."/>
            <person name="Rey M."/>
            <person name="Reynolds S."/>
            <person name="Rieger M."/>
            <person name="Rivolta C."/>
            <person name="Rocha E."/>
            <person name="Roche B."/>
            <person name="Rose M."/>
            <person name="Sadaie Y."/>
            <person name="Sato T."/>
            <person name="Scanlan E."/>
            <person name="Schleich S."/>
            <person name="Schroeter R."/>
            <person name="Scoffone F."/>
            <person name="Sekiguchi J."/>
            <person name="Sekowska A."/>
            <person name="Seror S.J."/>
            <person name="Serror P."/>
            <person name="Shin B.-S."/>
            <person name="Soldo B."/>
            <person name="Sorokin A."/>
            <person name="Tacconi E."/>
            <person name="Takagi T."/>
            <person name="Takahashi H."/>
            <person name="Takemaru K."/>
            <person name="Takeuchi M."/>
            <person name="Tamakoshi A."/>
            <person name="Tanaka T."/>
            <person name="Terpstra P."/>
            <person name="Tognoni A."/>
            <person name="Tosato V."/>
            <person name="Uchiyama S."/>
            <person name="Vandenbol M."/>
            <person name="Vannier F."/>
            <person name="Vassarotti A."/>
            <person name="Viari A."/>
            <person name="Wambutt R."/>
            <person name="Wedler E."/>
            <person name="Wedler H."/>
            <person name="Weitzenegger T."/>
            <person name="Winters P."/>
            <person name="Wipat A."/>
            <person name="Yamamoto H."/>
            <person name="Yamane K."/>
            <person name="Yasumoto K."/>
            <person name="Yata K."/>
            <person name="Yoshida K."/>
            <person name="Yoshikawa H.-F."/>
            <person name="Zumstein E."/>
            <person name="Yoshikawa H."/>
            <person name="Danchin A."/>
        </authorList>
    </citation>
    <scope>NUCLEOTIDE SEQUENCE [LARGE SCALE GENOMIC DNA]</scope>
    <source>
        <strain>168</strain>
    </source>
</reference>
<keyword id="KW-0067">ATP-binding</keyword>
<keyword id="KW-1003">Cell membrane</keyword>
<keyword id="KW-0472">Membrane</keyword>
<keyword id="KW-0547">Nucleotide-binding</keyword>
<keyword id="KW-1185">Reference proteome</keyword>
<keyword id="KW-0677">Repeat</keyword>
<keyword id="KW-0762">Sugar transport</keyword>
<keyword id="KW-1278">Translocase</keyword>
<keyword id="KW-0813">Transport</keyword>
<evidence type="ECO:0000255" key="1">
    <source>
        <dbReference type="HAMAP-Rule" id="MF_01716"/>
    </source>
</evidence>
<evidence type="ECO:0000305" key="2"/>
<dbReference type="EC" id="7.5.2.7" evidence="1"/>
<dbReference type="EMBL" id="Z25798">
    <property type="protein sequence ID" value="CAA81051.1"/>
    <property type="molecule type" value="Genomic_DNA"/>
</dbReference>
<dbReference type="EMBL" id="Z92953">
    <property type="protein sequence ID" value="CAB07463.1"/>
    <property type="molecule type" value="Genomic_DNA"/>
</dbReference>
<dbReference type="EMBL" id="AL009126">
    <property type="protein sequence ID" value="CAB15611.1"/>
    <property type="molecule type" value="Genomic_DNA"/>
</dbReference>
<dbReference type="PIR" id="H69689">
    <property type="entry name" value="H69689"/>
</dbReference>
<dbReference type="RefSeq" id="NP_391475.1">
    <property type="nucleotide sequence ID" value="NC_000964.3"/>
</dbReference>
<dbReference type="RefSeq" id="WP_003244379.1">
    <property type="nucleotide sequence ID" value="NZ_OZ025638.1"/>
</dbReference>
<dbReference type="SMR" id="P36947"/>
<dbReference type="FunCoup" id="P36947">
    <property type="interactions" value="215"/>
</dbReference>
<dbReference type="STRING" id="224308.BSU35940"/>
<dbReference type="jPOST" id="P36947"/>
<dbReference type="PaxDb" id="224308-BSU35940"/>
<dbReference type="DNASU" id="936839"/>
<dbReference type="EnsemblBacteria" id="CAB15611">
    <property type="protein sequence ID" value="CAB15611"/>
    <property type="gene ID" value="BSU_35940"/>
</dbReference>
<dbReference type="GeneID" id="936839"/>
<dbReference type="KEGG" id="bsu:BSU35940"/>
<dbReference type="PATRIC" id="fig|224308.179.peg.3891"/>
<dbReference type="eggNOG" id="COG1129">
    <property type="taxonomic scope" value="Bacteria"/>
</dbReference>
<dbReference type="InParanoid" id="P36947"/>
<dbReference type="OrthoDB" id="9771863at2"/>
<dbReference type="PhylomeDB" id="P36947"/>
<dbReference type="BioCyc" id="BSUB:BSU35940-MONOMER"/>
<dbReference type="Proteomes" id="UP000001570">
    <property type="component" value="Chromosome"/>
</dbReference>
<dbReference type="GO" id="GO:0005886">
    <property type="term" value="C:plasma membrane"/>
    <property type="evidence" value="ECO:0007669"/>
    <property type="project" value="UniProtKB-SubCell"/>
</dbReference>
<dbReference type="GO" id="GO:0015611">
    <property type="term" value="F:ABC-type D-ribose transporter activity"/>
    <property type="evidence" value="ECO:0007669"/>
    <property type="project" value="UniProtKB-EC"/>
</dbReference>
<dbReference type="GO" id="GO:0005524">
    <property type="term" value="F:ATP binding"/>
    <property type="evidence" value="ECO:0007669"/>
    <property type="project" value="UniProtKB-KW"/>
</dbReference>
<dbReference type="GO" id="GO:0016887">
    <property type="term" value="F:ATP hydrolysis activity"/>
    <property type="evidence" value="ECO:0007669"/>
    <property type="project" value="InterPro"/>
</dbReference>
<dbReference type="CDD" id="cd03216">
    <property type="entry name" value="ABC_Carb_Monos_I"/>
    <property type="match status" value="1"/>
</dbReference>
<dbReference type="CDD" id="cd03215">
    <property type="entry name" value="ABC_Carb_Monos_II"/>
    <property type="match status" value="1"/>
</dbReference>
<dbReference type="FunFam" id="3.40.50.300:FF:000126">
    <property type="entry name" value="Galactose/methyl galactoside import ATP-binding protein MglA"/>
    <property type="match status" value="1"/>
</dbReference>
<dbReference type="FunFam" id="3.40.50.300:FF:000127">
    <property type="entry name" value="Ribose import ATP-binding protein RbsA"/>
    <property type="match status" value="1"/>
</dbReference>
<dbReference type="Gene3D" id="3.40.50.300">
    <property type="entry name" value="P-loop containing nucleotide triphosphate hydrolases"/>
    <property type="match status" value="2"/>
</dbReference>
<dbReference type="InterPro" id="IPR003593">
    <property type="entry name" value="AAA+_ATPase"/>
</dbReference>
<dbReference type="InterPro" id="IPR050107">
    <property type="entry name" value="ABC_carbohydrate_import_ATPase"/>
</dbReference>
<dbReference type="InterPro" id="IPR003439">
    <property type="entry name" value="ABC_transporter-like_ATP-bd"/>
</dbReference>
<dbReference type="InterPro" id="IPR017871">
    <property type="entry name" value="ABC_transporter-like_CS"/>
</dbReference>
<dbReference type="InterPro" id="IPR027417">
    <property type="entry name" value="P-loop_NTPase"/>
</dbReference>
<dbReference type="PANTHER" id="PTHR43790">
    <property type="entry name" value="CARBOHYDRATE TRANSPORT ATP-BINDING PROTEIN MG119-RELATED"/>
    <property type="match status" value="1"/>
</dbReference>
<dbReference type="PANTHER" id="PTHR43790:SF3">
    <property type="entry name" value="D-ALLOSE IMPORT ATP-BINDING PROTEIN ALSA-RELATED"/>
    <property type="match status" value="1"/>
</dbReference>
<dbReference type="Pfam" id="PF00005">
    <property type="entry name" value="ABC_tran"/>
    <property type="match status" value="2"/>
</dbReference>
<dbReference type="SMART" id="SM00382">
    <property type="entry name" value="AAA"/>
    <property type="match status" value="2"/>
</dbReference>
<dbReference type="SUPFAM" id="SSF52540">
    <property type="entry name" value="P-loop containing nucleoside triphosphate hydrolases"/>
    <property type="match status" value="2"/>
</dbReference>
<dbReference type="PROSITE" id="PS00211">
    <property type="entry name" value="ABC_TRANSPORTER_1"/>
    <property type="match status" value="2"/>
</dbReference>
<dbReference type="PROSITE" id="PS50893">
    <property type="entry name" value="ABC_TRANSPORTER_2"/>
    <property type="match status" value="2"/>
</dbReference>
<dbReference type="PROSITE" id="PS51254">
    <property type="entry name" value="RBSA"/>
    <property type="match status" value="1"/>
</dbReference>
<feature type="chain" id="PRO_0000092955" description="Ribose import ATP-binding protein RbsA">
    <location>
        <begin position="1"/>
        <end position="493"/>
    </location>
</feature>
<feature type="domain" description="ABC transporter 1" evidence="1">
    <location>
        <begin position="3"/>
        <end position="239"/>
    </location>
</feature>
<feature type="domain" description="ABC transporter 2" evidence="1">
    <location>
        <begin position="246"/>
        <end position="493"/>
    </location>
</feature>
<feature type="binding site" evidence="1">
    <location>
        <begin position="35"/>
        <end position="42"/>
    </location>
    <ligand>
        <name>ATP</name>
        <dbReference type="ChEBI" id="CHEBI:30616"/>
    </ligand>
</feature>
<feature type="sequence conflict" description="In Ref. 1; CAA81051." evidence="2" ref="1">
    <original>T</original>
    <variation>R</variation>
    <location>
        <position position="43"/>
    </location>
</feature>
<feature type="sequence conflict" description="In Ref. 1; CAA81051." evidence="2" ref="1">
    <original>GLGFITENRKDEGLLLDTSIRENIALPNLSSFSPKGLIDHKREAEFVDLLIKRLTIK</original>
    <variation>VSALLQRIARMKGSCS</variation>
    <location>
        <begin position="327"/>
        <end position="383"/>
    </location>
</feature>
<feature type="sequence conflict" description="In Ref. 1; CAA81051." evidence="2" ref="1">
    <original>NQQ</original>
    <variation>KPGK</variation>
    <location>
        <begin position="398"/>
        <end position="400"/>
    </location>
</feature>